<name>Y3153_STUS1</name>
<sequence length="159" mass="18124">MPSFDVVSELDKHEVTNAIDNAIKELDRRYDLRGKGSFEQKDLTVQLTAEAEFQLEQMLEILKLSLVKRKIDIQCLEVKDAYASGKTMKQEAVLREGIDKELAKKIVAHIKDAKLKVQAAIQGEQVRVTGKKRDDLQEAIALLRGHEFGMPLQFNNFRD</sequence>
<reference key="1">
    <citation type="journal article" date="2008" name="Proc. Natl. Acad. Sci. U.S.A.">
        <title>Nitrogen fixation island and rhizosphere competence traits in the genome of root-associated Pseudomonas stutzeri A1501.</title>
        <authorList>
            <person name="Yan Y."/>
            <person name="Yang J."/>
            <person name="Dou Y."/>
            <person name="Chen M."/>
            <person name="Ping S."/>
            <person name="Peng J."/>
            <person name="Lu W."/>
            <person name="Zhang W."/>
            <person name="Yao Z."/>
            <person name="Li H."/>
            <person name="Liu W."/>
            <person name="He S."/>
            <person name="Geng L."/>
            <person name="Zhang X."/>
            <person name="Yang F."/>
            <person name="Yu H."/>
            <person name="Zhan Y."/>
            <person name="Li D."/>
            <person name="Lin Z."/>
            <person name="Wang Y."/>
            <person name="Elmerich C."/>
            <person name="Lin M."/>
            <person name="Jin Q."/>
        </authorList>
    </citation>
    <scope>NUCLEOTIDE SEQUENCE [LARGE SCALE GENOMIC DNA]</scope>
    <source>
        <strain>A1501</strain>
    </source>
</reference>
<comment type="function">
    <text evidence="1">Nucleotide-binding protein.</text>
</comment>
<comment type="similarity">
    <text evidence="1">Belongs to the YajQ family.</text>
</comment>
<protein>
    <recommendedName>
        <fullName evidence="1">Nucleotide-binding protein PST_3153</fullName>
    </recommendedName>
</protein>
<dbReference type="EMBL" id="CP000304">
    <property type="protein sequence ID" value="ABP80791.1"/>
    <property type="molecule type" value="Genomic_DNA"/>
</dbReference>
<dbReference type="RefSeq" id="WP_011914241.1">
    <property type="nucleotide sequence ID" value="NC_009434.1"/>
</dbReference>
<dbReference type="SMR" id="A4VP90"/>
<dbReference type="KEGG" id="psa:PST_3153"/>
<dbReference type="eggNOG" id="COG1666">
    <property type="taxonomic scope" value="Bacteria"/>
</dbReference>
<dbReference type="HOGENOM" id="CLU_099839_1_0_6"/>
<dbReference type="Proteomes" id="UP000000233">
    <property type="component" value="Chromosome"/>
</dbReference>
<dbReference type="GO" id="GO:0005829">
    <property type="term" value="C:cytosol"/>
    <property type="evidence" value="ECO:0007669"/>
    <property type="project" value="TreeGrafter"/>
</dbReference>
<dbReference type="GO" id="GO:0000166">
    <property type="term" value="F:nucleotide binding"/>
    <property type="evidence" value="ECO:0007669"/>
    <property type="project" value="TreeGrafter"/>
</dbReference>
<dbReference type="CDD" id="cd11740">
    <property type="entry name" value="YajQ_like"/>
    <property type="match status" value="1"/>
</dbReference>
<dbReference type="FunFam" id="3.30.70.860:FF:000001">
    <property type="entry name" value="UPF0234 protein YajQ"/>
    <property type="match status" value="1"/>
</dbReference>
<dbReference type="Gene3D" id="3.30.70.860">
    <property type="match status" value="1"/>
</dbReference>
<dbReference type="Gene3D" id="3.30.70.990">
    <property type="entry name" value="YajQ-like, domain 2"/>
    <property type="match status" value="1"/>
</dbReference>
<dbReference type="HAMAP" id="MF_00632">
    <property type="entry name" value="YajQ"/>
    <property type="match status" value="1"/>
</dbReference>
<dbReference type="InterPro" id="IPR007551">
    <property type="entry name" value="DUF520"/>
</dbReference>
<dbReference type="InterPro" id="IPR035571">
    <property type="entry name" value="UPF0234-like_C"/>
</dbReference>
<dbReference type="InterPro" id="IPR035570">
    <property type="entry name" value="UPF0234_N"/>
</dbReference>
<dbReference type="InterPro" id="IPR036183">
    <property type="entry name" value="YajQ-like_sf"/>
</dbReference>
<dbReference type="NCBIfam" id="NF003819">
    <property type="entry name" value="PRK05412.1"/>
    <property type="match status" value="1"/>
</dbReference>
<dbReference type="PANTHER" id="PTHR30476">
    <property type="entry name" value="UPF0234 PROTEIN YAJQ"/>
    <property type="match status" value="1"/>
</dbReference>
<dbReference type="PANTHER" id="PTHR30476:SF0">
    <property type="entry name" value="UPF0234 PROTEIN YAJQ"/>
    <property type="match status" value="1"/>
</dbReference>
<dbReference type="Pfam" id="PF04461">
    <property type="entry name" value="DUF520"/>
    <property type="match status" value="1"/>
</dbReference>
<dbReference type="SUPFAM" id="SSF89963">
    <property type="entry name" value="YajQ-like"/>
    <property type="match status" value="2"/>
</dbReference>
<accession>A4VP90</accession>
<organism>
    <name type="scientific">Stutzerimonas stutzeri (strain A1501)</name>
    <name type="common">Pseudomonas stutzeri</name>
    <dbReference type="NCBI Taxonomy" id="379731"/>
    <lineage>
        <taxon>Bacteria</taxon>
        <taxon>Pseudomonadati</taxon>
        <taxon>Pseudomonadota</taxon>
        <taxon>Gammaproteobacteria</taxon>
        <taxon>Pseudomonadales</taxon>
        <taxon>Pseudomonadaceae</taxon>
        <taxon>Stutzerimonas</taxon>
    </lineage>
</organism>
<keyword id="KW-0547">Nucleotide-binding</keyword>
<keyword id="KW-1185">Reference proteome</keyword>
<evidence type="ECO:0000255" key="1">
    <source>
        <dbReference type="HAMAP-Rule" id="MF_00632"/>
    </source>
</evidence>
<feature type="chain" id="PRO_1000051751" description="Nucleotide-binding protein PST_3153">
    <location>
        <begin position="1"/>
        <end position="159"/>
    </location>
</feature>
<proteinExistence type="inferred from homology"/>
<gene>
    <name type="ordered locus">PST_3153</name>
</gene>